<reference key="1">
    <citation type="journal article" date="1996" name="DNA Res.">
        <title>Sequence analysis of the genome of the unicellular cyanobacterium Synechocystis sp. strain PCC6803. II. Sequence determination of the entire genome and assignment of potential protein-coding regions.</title>
        <authorList>
            <person name="Kaneko T."/>
            <person name="Sato S."/>
            <person name="Kotani H."/>
            <person name="Tanaka A."/>
            <person name="Asamizu E."/>
            <person name="Nakamura Y."/>
            <person name="Miyajima N."/>
            <person name="Hirosawa M."/>
            <person name="Sugiura M."/>
            <person name="Sasamoto S."/>
            <person name="Kimura T."/>
            <person name="Hosouchi T."/>
            <person name="Matsuno A."/>
            <person name="Muraki A."/>
            <person name="Nakazaki N."/>
            <person name="Naruo K."/>
            <person name="Okumura S."/>
            <person name="Shimpo S."/>
            <person name="Takeuchi C."/>
            <person name="Wada T."/>
            <person name="Watanabe A."/>
            <person name="Yamada M."/>
            <person name="Yasuda M."/>
            <person name="Tabata S."/>
        </authorList>
    </citation>
    <scope>NUCLEOTIDE SEQUENCE [LARGE SCALE GENOMIC DNA]</scope>
    <source>
        <strain>ATCC 27184 / PCC 6803 / Kazusa</strain>
    </source>
</reference>
<sequence length="240" mass="27075">MTKIRTVSDAKRKFFTHYSRPISSIYRRFVEELLVEMHLLSVNIDFTYDPIFALGIVTSFNSFMQGYQPAEQLPAIFNALCHGVDQNPDQVRQDAKNVAASAHHIGLDAWVTAAASEQASGDNLLLNTLTGIHQRHKFKYSRLFAIGLYTLLADQDPEVKDNDEKRQDYLTRLSELLDLSLDKVVKDLDLYRSNLEKVDQLLKVLEDAAEAERKKKEKQAASTTPAIEEAPVTTAESSES</sequence>
<gene>
    <name evidence="1" type="primary">thf1</name>
    <name type="ordered locus">sll1414</name>
</gene>
<proteinExistence type="inferred from homology"/>
<dbReference type="EMBL" id="BA000022">
    <property type="protein sequence ID" value="BAA18023.1"/>
    <property type="molecule type" value="Genomic_DNA"/>
</dbReference>
<dbReference type="PIR" id="S75462">
    <property type="entry name" value="S75462"/>
</dbReference>
<dbReference type="SMR" id="P73956"/>
<dbReference type="IntAct" id="P73956">
    <property type="interactions" value="2"/>
</dbReference>
<dbReference type="STRING" id="1148.gene:10498893"/>
<dbReference type="PaxDb" id="1148-1653107"/>
<dbReference type="EnsemblBacteria" id="BAA18023">
    <property type="protein sequence ID" value="BAA18023"/>
    <property type="gene ID" value="BAA18023"/>
</dbReference>
<dbReference type="KEGG" id="syn:sll1414"/>
<dbReference type="eggNOG" id="ENOG502Z86M">
    <property type="taxonomic scope" value="Bacteria"/>
</dbReference>
<dbReference type="InParanoid" id="P73956"/>
<dbReference type="PhylomeDB" id="P73956"/>
<dbReference type="Proteomes" id="UP000001425">
    <property type="component" value="Chromosome"/>
</dbReference>
<dbReference type="GO" id="GO:0030096">
    <property type="term" value="C:plasma membrane-derived thylakoid photosystem II"/>
    <property type="evidence" value="ECO:0000314"/>
    <property type="project" value="UniProtKB"/>
</dbReference>
<dbReference type="GO" id="GO:0010207">
    <property type="term" value="P:photosystem II assembly"/>
    <property type="evidence" value="ECO:0007669"/>
    <property type="project" value="InterPro"/>
</dbReference>
<dbReference type="HAMAP" id="MF_01843">
    <property type="entry name" value="Thf1"/>
    <property type="match status" value="1"/>
</dbReference>
<dbReference type="InterPro" id="IPR017499">
    <property type="entry name" value="Thf1"/>
</dbReference>
<dbReference type="NCBIfam" id="TIGR03060">
    <property type="entry name" value="PS_II_psb29"/>
    <property type="match status" value="1"/>
</dbReference>
<dbReference type="PANTHER" id="PTHR34793">
    <property type="entry name" value="PROTEIN THYLAKOID FORMATION 1, CHLOROPLASTIC"/>
    <property type="match status" value="1"/>
</dbReference>
<dbReference type="PANTHER" id="PTHR34793:SF1">
    <property type="entry name" value="PROTEIN THYLAKOID FORMATION 1, CHLOROPLASTIC"/>
    <property type="match status" value="1"/>
</dbReference>
<dbReference type="Pfam" id="PF11264">
    <property type="entry name" value="ThylakoidFormat"/>
    <property type="match status" value="1"/>
</dbReference>
<feature type="chain" id="PRO_0000235226" description="Protein Thf1">
    <location>
        <begin position="1"/>
        <end position="240"/>
    </location>
</feature>
<feature type="region of interest" description="Disordered" evidence="2">
    <location>
        <begin position="212"/>
        <end position="240"/>
    </location>
</feature>
<feature type="coiled-coil region" evidence="1">
    <location>
        <begin position="186"/>
        <end position="222"/>
    </location>
</feature>
<protein>
    <recommendedName>
        <fullName evidence="1">Protein Thf1</fullName>
    </recommendedName>
</protein>
<evidence type="ECO:0000255" key="1">
    <source>
        <dbReference type="HAMAP-Rule" id="MF_01843"/>
    </source>
</evidence>
<evidence type="ECO:0000256" key="2">
    <source>
        <dbReference type="SAM" id="MobiDB-lite"/>
    </source>
</evidence>
<organism>
    <name type="scientific">Synechocystis sp. (strain ATCC 27184 / PCC 6803 / Kazusa)</name>
    <dbReference type="NCBI Taxonomy" id="1111708"/>
    <lineage>
        <taxon>Bacteria</taxon>
        <taxon>Bacillati</taxon>
        <taxon>Cyanobacteriota</taxon>
        <taxon>Cyanophyceae</taxon>
        <taxon>Synechococcales</taxon>
        <taxon>Merismopediaceae</taxon>
        <taxon>Synechocystis</taxon>
    </lineage>
</organism>
<comment type="function">
    <text evidence="1">May be involved in photosynthetic membrane biogenesis.</text>
</comment>
<comment type="similarity">
    <text evidence="1">Belongs to the THF1 family.</text>
</comment>
<keyword id="KW-0175">Coiled coil</keyword>
<keyword id="KW-1185">Reference proteome</keyword>
<accession>P73956</accession>
<name>THF1_SYNY3</name>